<name>PHNW1_POLSJ</name>
<proteinExistence type="inferred from homology"/>
<comment type="function">
    <text evidence="1">Involved in phosphonate degradation.</text>
</comment>
<comment type="catalytic activity">
    <reaction evidence="1">
        <text>(2-aminoethyl)phosphonate + pyruvate = phosphonoacetaldehyde + L-alanine</text>
        <dbReference type="Rhea" id="RHEA:17021"/>
        <dbReference type="ChEBI" id="CHEBI:15361"/>
        <dbReference type="ChEBI" id="CHEBI:57418"/>
        <dbReference type="ChEBI" id="CHEBI:57972"/>
        <dbReference type="ChEBI" id="CHEBI:58383"/>
        <dbReference type="EC" id="2.6.1.37"/>
    </reaction>
</comment>
<comment type="cofactor">
    <cofactor evidence="1">
        <name>pyridoxal 5'-phosphate</name>
        <dbReference type="ChEBI" id="CHEBI:597326"/>
    </cofactor>
</comment>
<comment type="subunit">
    <text evidence="1">Homodimer.</text>
</comment>
<comment type="similarity">
    <text evidence="1">Belongs to the class-V pyridoxal-phosphate-dependent aminotransferase family. PhnW subfamily.</text>
</comment>
<comment type="caution">
    <text evidence="2">The second enzyme involved in phosphonate degradation (PhnX, EC 3.11.1.1) is not found in this organism. The function of this enzyme is therefore uncertain.</text>
</comment>
<keyword id="KW-0032">Aminotransferase</keyword>
<keyword id="KW-0663">Pyridoxal phosphate</keyword>
<keyword id="KW-0670">Pyruvate</keyword>
<keyword id="KW-1185">Reference proteome</keyword>
<keyword id="KW-0808">Transferase</keyword>
<protein>
    <recommendedName>
        <fullName evidence="1">2-aminoethylphosphonate--pyruvate transaminase 1</fullName>
        <ecNumber evidence="1">2.6.1.37</ecNumber>
    </recommendedName>
    <alternativeName>
        <fullName evidence="1">2-aminoethylphosphonate aminotransferase 1</fullName>
    </alternativeName>
    <alternativeName>
        <fullName evidence="1">AEP transaminase 1</fullName>
        <shortName evidence="1">AEPT 1</shortName>
    </alternativeName>
</protein>
<reference key="1">
    <citation type="journal article" date="2008" name="Appl. Environ. Microbiol.">
        <title>The genome of Polaromonas sp. strain JS666: insights into the evolution of a hydrocarbon- and xenobiotic-degrading bacterium, and features of relevance to biotechnology.</title>
        <authorList>
            <person name="Mattes T.E."/>
            <person name="Alexander A.K."/>
            <person name="Richardson P.M."/>
            <person name="Munk A.C."/>
            <person name="Han C.S."/>
            <person name="Stothard P."/>
            <person name="Coleman N.V."/>
        </authorList>
    </citation>
    <scope>NUCLEOTIDE SEQUENCE [LARGE SCALE GENOMIC DNA]</scope>
    <source>
        <strain>JS666 / ATCC BAA-500</strain>
    </source>
</reference>
<gene>
    <name evidence="1" type="primary">phnW1</name>
    <name type="ordered locus">Bpro_3216</name>
</gene>
<dbReference type="EC" id="2.6.1.37" evidence="1"/>
<dbReference type="EMBL" id="CP000316">
    <property type="protein sequence ID" value="ABE45130.1"/>
    <property type="molecule type" value="Genomic_DNA"/>
</dbReference>
<dbReference type="RefSeq" id="WP_011484125.1">
    <property type="nucleotide sequence ID" value="NC_007948.1"/>
</dbReference>
<dbReference type="SMR" id="Q128B2"/>
<dbReference type="STRING" id="296591.Bpro_3216"/>
<dbReference type="KEGG" id="pol:Bpro_3216"/>
<dbReference type="eggNOG" id="COG0075">
    <property type="taxonomic scope" value="Bacteria"/>
</dbReference>
<dbReference type="HOGENOM" id="CLU_027686_3_1_4"/>
<dbReference type="OrthoDB" id="9766472at2"/>
<dbReference type="Proteomes" id="UP000001983">
    <property type="component" value="Chromosome"/>
</dbReference>
<dbReference type="GO" id="GO:0047304">
    <property type="term" value="F:2-aminoethylphosphonate-pyruvate transaminase activity"/>
    <property type="evidence" value="ECO:0007669"/>
    <property type="project" value="UniProtKB-UniRule"/>
</dbReference>
<dbReference type="GO" id="GO:0019700">
    <property type="term" value="P:organic phosphonate catabolic process"/>
    <property type="evidence" value="ECO:0007669"/>
    <property type="project" value="InterPro"/>
</dbReference>
<dbReference type="Gene3D" id="3.90.1150.10">
    <property type="entry name" value="Aspartate Aminotransferase, domain 1"/>
    <property type="match status" value="1"/>
</dbReference>
<dbReference type="Gene3D" id="3.40.640.10">
    <property type="entry name" value="Type I PLP-dependent aspartate aminotransferase-like (Major domain)"/>
    <property type="match status" value="1"/>
</dbReference>
<dbReference type="HAMAP" id="MF_01376">
    <property type="entry name" value="PhnW_aminotrans_5"/>
    <property type="match status" value="1"/>
</dbReference>
<dbReference type="InterPro" id="IPR000192">
    <property type="entry name" value="Aminotrans_V_dom"/>
</dbReference>
<dbReference type="InterPro" id="IPR012703">
    <property type="entry name" value="NH2EtPonate_pyrv_transaminase"/>
</dbReference>
<dbReference type="InterPro" id="IPR015424">
    <property type="entry name" value="PyrdxlP-dep_Trfase"/>
</dbReference>
<dbReference type="InterPro" id="IPR015421">
    <property type="entry name" value="PyrdxlP-dep_Trfase_major"/>
</dbReference>
<dbReference type="InterPro" id="IPR015422">
    <property type="entry name" value="PyrdxlP-dep_Trfase_small"/>
</dbReference>
<dbReference type="InterPro" id="IPR024169">
    <property type="entry name" value="SP_NH2Trfase/AEP_transaminase"/>
</dbReference>
<dbReference type="NCBIfam" id="TIGR03301">
    <property type="entry name" value="PhnW-AepZ"/>
    <property type="match status" value="1"/>
</dbReference>
<dbReference type="NCBIfam" id="NF010006">
    <property type="entry name" value="PRK13479.1"/>
    <property type="match status" value="1"/>
</dbReference>
<dbReference type="NCBIfam" id="TIGR02326">
    <property type="entry name" value="transamin_PhnW"/>
    <property type="match status" value="1"/>
</dbReference>
<dbReference type="PANTHER" id="PTHR42778">
    <property type="entry name" value="2-AMINOETHYLPHOSPHONATE--PYRUVATE TRANSAMINASE"/>
    <property type="match status" value="1"/>
</dbReference>
<dbReference type="PANTHER" id="PTHR42778:SF1">
    <property type="entry name" value="2-AMINOETHYLPHOSPHONATE--PYRUVATE TRANSAMINASE"/>
    <property type="match status" value="1"/>
</dbReference>
<dbReference type="Pfam" id="PF00266">
    <property type="entry name" value="Aminotran_5"/>
    <property type="match status" value="1"/>
</dbReference>
<dbReference type="PIRSF" id="PIRSF000524">
    <property type="entry name" value="SPT"/>
    <property type="match status" value="1"/>
</dbReference>
<dbReference type="SUPFAM" id="SSF53383">
    <property type="entry name" value="PLP-dependent transferases"/>
    <property type="match status" value="1"/>
</dbReference>
<organism>
    <name type="scientific">Polaromonas sp. (strain JS666 / ATCC BAA-500)</name>
    <dbReference type="NCBI Taxonomy" id="296591"/>
    <lineage>
        <taxon>Bacteria</taxon>
        <taxon>Pseudomonadati</taxon>
        <taxon>Pseudomonadota</taxon>
        <taxon>Betaproteobacteria</taxon>
        <taxon>Burkholderiales</taxon>
        <taxon>Comamonadaceae</taxon>
        <taxon>Polaromonas</taxon>
    </lineage>
</organism>
<evidence type="ECO:0000255" key="1">
    <source>
        <dbReference type="HAMAP-Rule" id="MF_01376"/>
    </source>
</evidence>
<evidence type="ECO:0000305" key="2"/>
<feature type="chain" id="PRO_0000286771" description="2-aminoethylphosphonate--pyruvate transaminase 1">
    <location>
        <begin position="1"/>
        <end position="374"/>
    </location>
</feature>
<feature type="modified residue" description="N6-(pyridoxal phosphate)lysine" evidence="1">
    <location>
        <position position="195"/>
    </location>
</feature>
<accession>Q128B2</accession>
<sequence>MTTDAILLTPGPLTTSSRTKQSMLRDWGSWDTDFNAITARLRQGLLRIVHGEGTHECVPLQGSGTFSVEAAIGTLVPPGEKGGHVLVPVNGAYCQRIAKICKVLGRKLTTFEYAEDAQIRPEDIDRLLAKDPSITHVALVHCETSTGILNPLHEIALVVQRHGKGLIVDAMSSFGALEIDARKTPFDAVVAASGKCLEGVPGMGFVLARRAALERCEGNCHSLAMDLYDQWVYMNKTTQWRFTPPTHVVAALDAALTQYFEQGGLAARGGAYAKNCRELISGLAGLGLRSFLPAAIQAPIIVTFHAPASPAYEFKAFYNAVRQRGYILYPGKLTAVETFRVGCMGQLGARGMAGAVEAVRDALQEMGLELANAE</sequence>